<proteinExistence type="inferred from homology"/>
<name>XYLD_AGRFC</name>
<comment type="catalytic activity">
    <reaction>
        <text>xylitol + NAD(+) = D-xylulose + NADH + H(+)</text>
        <dbReference type="Rhea" id="RHEA:20433"/>
        <dbReference type="ChEBI" id="CHEBI:15378"/>
        <dbReference type="ChEBI" id="CHEBI:17140"/>
        <dbReference type="ChEBI" id="CHEBI:17151"/>
        <dbReference type="ChEBI" id="CHEBI:57540"/>
        <dbReference type="ChEBI" id="CHEBI:57945"/>
        <dbReference type="EC" id="1.1.1.9"/>
    </reaction>
</comment>
<comment type="cofactor">
    <cofactor evidence="1">
        <name>Zn(2+)</name>
        <dbReference type="ChEBI" id="CHEBI:29105"/>
    </cofactor>
    <text evidence="1">Binds 1 zinc ion per subunit.</text>
</comment>
<comment type="similarity">
    <text evidence="2">Belongs to the zinc-containing alcohol dehydrogenase family.</text>
</comment>
<accession>Q8U7Y1</accession>
<gene>
    <name type="ordered locus">Atu4318</name>
    <name type="ORF">AGR_L_1091</name>
</gene>
<reference key="1">
    <citation type="journal article" date="2001" name="Science">
        <title>The genome of the natural genetic engineer Agrobacterium tumefaciens C58.</title>
        <authorList>
            <person name="Wood D.W."/>
            <person name="Setubal J.C."/>
            <person name="Kaul R."/>
            <person name="Monks D.E."/>
            <person name="Kitajima J.P."/>
            <person name="Okura V.K."/>
            <person name="Zhou Y."/>
            <person name="Chen L."/>
            <person name="Wood G.E."/>
            <person name="Almeida N.F. Jr."/>
            <person name="Woo L."/>
            <person name="Chen Y."/>
            <person name="Paulsen I.T."/>
            <person name="Eisen J.A."/>
            <person name="Karp P.D."/>
            <person name="Bovee D. Sr."/>
            <person name="Chapman P."/>
            <person name="Clendenning J."/>
            <person name="Deatherage G."/>
            <person name="Gillet W."/>
            <person name="Grant C."/>
            <person name="Kutyavin T."/>
            <person name="Levy R."/>
            <person name="Li M.-J."/>
            <person name="McClelland E."/>
            <person name="Palmieri A."/>
            <person name="Raymond C."/>
            <person name="Rouse G."/>
            <person name="Saenphimmachak C."/>
            <person name="Wu Z."/>
            <person name="Romero P."/>
            <person name="Gordon D."/>
            <person name="Zhang S."/>
            <person name="Yoo H."/>
            <person name="Tao Y."/>
            <person name="Biddle P."/>
            <person name="Jung M."/>
            <person name="Krespan W."/>
            <person name="Perry M."/>
            <person name="Gordon-Kamm B."/>
            <person name="Liao L."/>
            <person name="Kim S."/>
            <person name="Hendrick C."/>
            <person name="Zhao Z.-Y."/>
            <person name="Dolan M."/>
            <person name="Chumley F."/>
            <person name="Tingey S.V."/>
            <person name="Tomb J.-F."/>
            <person name="Gordon M.P."/>
            <person name="Olson M.V."/>
            <person name="Nester E.W."/>
        </authorList>
    </citation>
    <scope>NUCLEOTIDE SEQUENCE [LARGE SCALE GENOMIC DNA]</scope>
    <source>
        <strain>C58 / ATCC 33970</strain>
    </source>
</reference>
<reference key="2">
    <citation type="journal article" date="2001" name="Science">
        <title>Genome sequence of the plant pathogen and biotechnology agent Agrobacterium tumefaciens C58.</title>
        <authorList>
            <person name="Goodner B."/>
            <person name="Hinkle G."/>
            <person name="Gattung S."/>
            <person name="Miller N."/>
            <person name="Blanchard M."/>
            <person name="Qurollo B."/>
            <person name="Goldman B.S."/>
            <person name="Cao Y."/>
            <person name="Askenazi M."/>
            <person name="Halling C."/>
            <person name="Mullin L."/>
            <person name="Houmiel K."/>
            <person name="Gordon J."/>
            <person name="Vaudin M."/>
            <person name="Iartchouk O."/>
            <person name="Epp A."/>
            <person name="Liu F."/>
            <person name="Wollam C."/>
            <person name="Allinger M."/>
            <person name="Doughty D."/>
            <person name="Scott C."/>
            <person name="Lappas C."/>
            <person name="Markelz B."/>
            <person name="Flanagan C."/>
            <person name="Crowell C."/>
            <person name="Gurson J."/>
            <person name="Lomo C."/>
            <person name="Sear C."/>
            <person name="Strub G."/>
            <person name="Cielo C."/>
            <person name="Slater S."/>
        </authorList>
    </citation>
    <scope>NUCLEOTIDE SEQUENCE [LARGE SCALE GENOMIC DNA]</scope>
    <source>
        <strain>C58 / ATCC 33970</strain>
    </source>
</reference>
<feature type="chain" id="PRO_0000160884" description="Putative D-xylulose reductase">
    <location>
        <begin position="1"/>
        <end position="350"/>
    </location>
</feature>
<feature type="binding site" evidence="1">
    <location>
        <position position="43"/>
    </location>
    <ligand>
        <name>Zn(2+)</name>
        <dbReference type="ChEBI" id="CHEBI:29105"/>
        <note>catalytic</note>
    </ligand>
</feature>
<feature type="binding site" evidence="1">
    <location>
        <position position="68"/>
    </location>
    <ligand>
        <name>Zn(2+)</name>
        <dbReference type="ChEBI" id="CHEBI:29105"/>
        <note>catalytic</note>
    </ligand>
</feature>
<feature type="binding site" evidence="1">
    <location>
        <position position="154"/>
    </location>
    <ligand>
        <name>Zn(2+)</name>
        <dbReference type="ChEBI" id="CHEBI:29105"/>
        <note>catalytic</note>
    </ligand>
</feature>
<protein>
    <recommendedName>
        <fullName>Putative D-xylulose reductase</fullName>
        <ecNumber>1.1.1.9</ecNumber>
    </recommendedName>
    <alternativeName>
        <fullName>Xylitol dehydrogenase</fullName>
        <shortName>XDH</shortName>
    </alternativeName>
</protein>
<keyword id="KW-0479">Metal-binding</keyword>
<keyword id="KW-0520">NAD</keyword>
<keyword id="KW-0560">Oxidoreductase</keyword>
<keyword id="KW-1185">Reference proteome</keyword>
<keyword id="KW-0862">Zinc</keyword>
<evidence type="ECO:0000250" key="1"/>
<evidence type="ECO:0000305" key="2"/>
<dbReference type="EC" id="1.1.1.9"/>
<dbReference type="EMBL" id="AE007870">
    <property type="protein sequence ID" value="AAK89121.1"/>
    <property type="molecule type" value="Genomic_DNA"/>
</dbReference>
<dbReference type="PIR" id="AB3087">
    <property type="entry name" value="AB3087"/>
</dbReference>
<dbReference type="PIR" id="G98199">
    <property type="entry name" value="G98199"/>
</dbReference>
<dbReference type="RefSeq" id="NP_356336.1">
    <property type="nucleotide sequence ID" value="NC_003063.2"/>
</dbReference>
<dbReference type="RefSeq" id="WP_010973745.1">
    <property type="nucleotide sequence ID" value="NC_003063.2"/>
</dbReference>
<dbReference type="SMR" id="Q8U7Y1"/>
<dbReference type="STRING" id="176299.Atu4318"/>
<dbReference type="EnsemblBacteria" id="AAK89121">
    <property type="protein sequence ID" value="AAK89121"/>
    <property type="gene ID" value="Atu4318"/>
</dbReference>
<dbReference type="GeneID" id="1136192"/>
<dbReference type="KEGG" id="atu:Atu4318"/>
<dbReference type="PATRIC" id="fig|176299.10.peg.4128"/>
<dbReference type="eggNOG" id="COG1063">
    <property type="taxonomic scope" value="Bacteria"/>
</dbReference>
<dbReference type="HOGENOM" id="CLU_026673_11_5_5"/>
<dbReference type="OrthoDB" id="9809185at2"/>
<dbReference type="PhylomeDB" id="Q8U7Y1"/>
<dbReference type="BioCyc" id="AGRO:ATU4318-MONOMER"/>
<dbReference type="Proteomes" id="UP000000813">
    <property type="component" value="Chromosome linear"/>
</dbReference>
<dbReference type="GO" id="GO:0046526">
    <property type="term" value="F:D-xylulose reductase activity"/>
    <property type="evidence" value="ECO:0007669"/>
    <property type="project" value="UniProtKB-EC"/>
</dbReference>
<dbReference type="GO" id="GO:0008270">
    <property type="term" value="F:zinc ion binding"/>
    <property type="evidence" value="ECO:0007669"/>
    <property type="project" value="InterPro"/>
</dbReference>
<dbReference type="CDD" id="cd05285">
    <property type="entry name" value="sorbitol_DH"/>
    <property type="match status" value="1"/>
</dbReference>
<dbReference type="Gene3D" id="3.90.180.10">
    <property type="entry name" value="Medium-chain alcohol dehydrogenases, catalytic domain"/>
    <property type="match status" value="1"/>
</dbReference>
<dbReference type="Gene3D" id="3.40.50.720">
    <property type="entry name" value="NAD(P)-binding Rossmann-like Domain"/>
    <property type="match status" value="1"/>
</dbReference>
<dbReference type="InterPro" id="IPR013149">
    <property type="entry name" value="ADH-like_C"/>
</dbReference>
<dbReference type="InterPro" id="IPR013154">
    <property type="entry name" value="ADH-like_N"/>
</dbReference>
<dbReference type="InterPro" id="IPR002328">
    <property type="entry name" value="ADH_Zn_CS"/>
</dbReference>
<dbReference type="InterPro" id="IPR011032">
    <property type="entry name" value="GroES-like_sf"/>
</dbReference>
<dbReference type="InterPro" id="IPR036291">
    <property type="entry name" value="NAD(P)-bd_dom_sf"/>
</dbReference>
<dbReference type="InterPro" id="IPR020843">
    <property type="entry name" value="PKS_ER"/>
</dbReference>
<dbReference type="InterPro" id="IPR045306">
    <property type="entry name" value="SDH-like"/>
</dbReference>
<dbReference type="PANTHER" id="PTHR43161">
    <property type="entry name" value="SORBITOL DEHYDROGENASE"/>
    <property type="match status" value="1"/>
</dbReference>
<dbReference type="PANTHER" id="PTHR43161:SF9">
    <property type="entry name" value="SORBITOL DEHYDROGENASE"/>
    <property type="match status" value="1"/>
</dbReference>
<dbReference type="Pfam" id="PF08240">
    <property type="entry name" value="ADH_N"/>
    <property type="match status" value="1"/>
</dbReference>
<dbReference type="Pfam" id="PF00107">
    <property type="entry name" value="ADH_zinc_N"/>
    <property type="match status" value="1"/>
</dbReference>
<dbReference type="SMART" id="SM00829">
    <property type="entry name" value="PKS_ER"/>
    <property type="match status" value="1"/>
</dbReference>
<dbReference type="SUPFAM" id="SSF50129">
    <property type="entry name" value="GroES-like"/>
    <property type="match status" value="1"/>
</dbReference>
<dbReference type="SUPFAM" id="SSF51735">
    <property type="entry name" value="NAD(P)-binding Rossmann-fold domains"/>
    <property type="match status" value="1"/>
</dbReference>
<dbReference type="PROSITE" id="PS00059">
    <property type="entry name" value="ADH_ZINC"/>
    <property type="match status" value="1"/>
</dbReference>
<sequence length="350" mass="36776">MKALVLEEKGKLSLRDFDIPGGAGSGELGPKDVRIRTHTVGICGSDVHYYTHGKIGHFVVNAPMVLGHEASGTVIETGSDVTHLKIGDRVCMEPGIPDPTSRASKLGIYNVDPAVRFWATPPIHGCLTPEVIHPAAFTYKLPDNVSFAEGAMVEPFAIGMQAALRARIQPGDIAVVTGAGPIGMMVALAALAGGCAKVIVADLAQPKLDIIAAYDGIETINIRERNLAEAVSAATDGWGCDIVFECSGAAPAILGMAKLARPGGAIVLVGMPVDPVPVDIVGLQAKELRVETVFRYANVYDRAVALIASGKVDLKPLISATIPFEDSIAGFDRAVEARETDVKLQIVMPQ</sequence>
<organism>
    <name type="scientific">Agrobacterium fabrum (strain C58 / ATCC 33970)</name>
    <name type="common">Agrobacterium tumefaciens (strain C58)</name>
    <dbReference type="NCBI Taxonomy" id="176299"/>
    <lineage>
        <taxon>Bacteria</taxon>
        <taxon>Pseudomonadati</taxon>
        <taxon>Pseudomonadota</taxon>
        <taxon>Alphaproteobacteria</taxon>
        <taxon>Hyphomicrobiales</taxon>
        <taxon>Rhizobiaceae</taxon>
        <taxon>Rhizobium/Agrobacterium group</taxon>
        <taxon>Agrobacterium</taxon>
        <taxon>Agrobacterium tumefaciens complex</taxon>
    </lineage>
</organism>